<accession>A9MQH4</accession>
<protein>
    <recommendedName>
        <fullName evidence="1">L-carnitine/gamma-butyrobetaine antiporter</fullName>
    </recommendedName>
</protein>
<gene>
    <name evidence="1" type="primary">caiT</name>
    <name type="ordered locus">SARI_02926</name>
</gene>
<feature type="chain" id="PRO_1000084422" description="L-carnitine/gamma-butyrobetaine antiporter">
    <location>
        <begin position="1"/>
        <end position="505"/>
    </location>
</feature>
<feature type="transmembrane region" description="Helical" evidence="1">
    <location>
        <begin position="10"/>
        <end position="30"/>
    </location>
</feature>
<feature type="transmembrane region" description="Helical" evidence="1">
    <location>
        <begin position="50"/>
        <end position="70"/>
    </location>
</feature>
<feature type="transmembrane region" description="Helical" evidence="1">
    <location>
        <begin position="92"/>
        <end position="112"/>
    </location>
</feature>
<feature type="transmembrane region" description="Helical" evidence="1">
    <location>
        <begin position="143"/>
        <end position="163"/>
    </location>
</feature>
<feature type="transmembrane region" description="Helical" evidence="1">
    <location>
        <begin position="195"/>
        <end position="215"/>
    </location>
</feature>
<feature type="transmembrane region" description="Helical" evidence="1">
    <location>
        <begin position="231"/>
        <end position="251"/>
    </location>
</feature>
<feature type="transmembrane region" description="Helical" evidence="1">
    <location>
        <begin position="263"/>
        <end position="283"/>
    </location>
</feature>
<feature type="transmembrane region" description="Helical" evidence="1">
    <location>
        <begin position="316"/>
        <end position="336"/>
    </location>
</feature>
<feature type="transmembrane region" description="Helical" evidence="1">
    <location>
        <begin position="347"/>
        <end position="367"/>
    </location>
</feature>
<feature type="transmembrane region" description="Helical" evidence="1">
    <location>
        <begin position="403"/>
        <end position="423"/>
    </location>
</feature>
<feature type="transmembrane region" description="Helical" evidence="1">
    <location>
        <begin position="446"/>
        <end position="466"/>
    </location>
</feature>
<feature type="transmembrane region" description="Helical" evidence="1">
    <location>
        <begin position="475"/>
        <end position="495"/>
    </location>
</feature>
<comment type="function">
    <text evidence="1">Catalyzes the exchange of L-carnitine for gamma-butyrobetaine.</text>
</comment>
<comment type="catalytic activity">
    <reaction evidence="1">
        <text>4-(trimethylamino)butanoate(in) + (R)-carnitine(out) = 4-(trimethylamino)butanoate(out) + (R)-carnitine(in)</text>
        <dbReference type="Rhea" id="RHEA:29427"/>
        <dbReference type="ChEBI" id="CHEBI:16244"/>
        <dbReference type="ChEBI" id="CHEBI:16347"/>
    </reaction>
</comment>
<comment type="pathway">
    <text evidence="1">Amine and polyamine metabolism; carnitine metabolism.</text>
</comment>
<comment type="subunit">
    <text evidence="1">Homotrimer.</text>
</comment>
<comment type="subcellular location">
    <subcellularLocation>
        <location evidence="1">Cell inner membrane</location>
        <topology evidence="1">Multi-pass membrane protein</topology>
    </subcellularLocation>
</comment>
<comment type="similarity">
    <text evidence="1">Belongs to the BCCT transporter (TC 2.A.15) family. CaiT subfamily.</text>
</comment>
<dbReference type="EMBL" id="CP000880">
    <property type="protein sequence ID" value="ABX22772.1"/>
    <property type="molecule type" value="Genomic_DNA"/>
</dbReference>
<dbReference type="SMR" id="A9MQH4"/>
<dbReference type="STRING" id="41514.SARI_02926"/>
<dbReference type="KEGG" id="ses:SARI_02926"/>
<dbReference type="HOGENOM" id="CLU_010118_6_0_6"/>
<dbReference type="UniPathway" id="UPA00117"/>
<dbReference type="Proteomes" id="UP000002084">
    <property type="component" value="Chromosome"/>
</dbReference>
<dbReference type="GO" id="GO:0005886">
    <property type="term" value="C:plasma membrane"/>
    <property type="evidence" value="ECO:0007669"/>
    <property type="project" value="UniProtKB-SubCell"/>
</dbReference>
<dbReference type="GO" id="GO:0044667">
    <property type="term" value="F:(R)-carnitine:4-(trimethylammonio)butanoate antiporter activity"/>
    <property type="evidence" value="ECO:0007669"/>
    <property type="project" value="UniProtKB-UniRule"/>
</dbReference>
<dbReference type="GO" id="GO:1900751">
    <property type="term" value="P:4-(trimethylammonio)butanoate transport"/>
    <property type="evidence" value="ECO:0007669"/>
    <property type="project" value="InterPro"/>
</dbReference>
<dbReference type="GO" id="GO:0009437">
    <property type="term" value="P:carnitine metabolic process"/>
    <property type="evidence" value="ECO:0007669"/>
    <property type="project" value="UniProtKB-UniRule"/>
</dbReference>
<dbReference type="HAMAP" id="MF_01049">
    <property type="entry name" value="CaiT"/>
    <property type="match status" value="1"/>
</dbReference>
<dbReference type="InterPro" id="IPR018093">
    <property type="entry name" value="BCCT_CS"/>
</dbReference>
<dbReference type="InterPro" id="IPR000060">
    <property type="entry name" value="BCCT_transptr"/>
</dbReference>
<dbReference type="InterPro" id="IPR023449">
    <property type="entry name" value="BCCT_transptr_CaiT"/>
</dbReference>
<dbReference type="NCBIfam" id="TIGR00842">
    <property type="entry name" value="bcct"/>
    <property type="match status" value="1"/>
</dbReference>
<dbReference type="NCBIfam" id="NF002887">
    <property type="entry name" value="PRK03356.1"/>
    <property type="match status" value="1"/>
</dbReference>
<dbReference type="PANTHER" id="PTHR30047">
    <property type="entry name" value="HIGH-AFFINITY CHOLINE TRANSPORT PROTEIN-RELATED"/>
    <property type="match status" value="1"/>
</dbReference>
<dbReference type="PANTHER" id="PTHR30047:SF11">
    <property type="entry name" value="L-CARNITINE_GAMMA-BUTYROBETAINE ANTIPORTER"/>
    <property type="match status" value="1"/>
</dbReference>
<dbReference type="Pfam" id="PF02028">
    <property type="entry name" value="BCCT"/>
    <property type="match status" value="1"/>
</dbReference>
<dbReference type="PROSITE" id="PS01303">
    <property type="entry name" value="BCCT"/>
    <property type="match status" value="1"/>
</dbReference>
<proteinExistence type="inferred from homology"/>
<keyword id="KW-0050">Antiport</keyword>
<keyword id="KW-0997">Cell inner membrane</keyword>
<keyword id="KW-1003">Cell membrane</keyword>
<keyword id="KW-0472">Membrane</keyword>
<keyword id="KW-1185">Reference proteome</keyword>
<keyword id="KW-0812">Transmembrane</keyword>
<keyword id="KW-1133">Transmembrane helix</keyword>
<keyword id="KW-0813">Transport</keyword>
<evidence type="ECO:0000255" key="1">
    <source>
        <dbReference type="HAMAP-Rule" id="MF_01049"/>
    </source>
</evidence>
<reference key="1">
    <citation type="submission" date="2007-11" db="EMBL/GenBank/DDBJ databases">
        <authorList>
            <consortium name="The Salmonella enterica serovar Arizonae Genome Sequencing Project"/>
            <person name="McClelland M."/>
            <person name="Sanderson E.K."/>
            <person name="Porwollik S."/>
            <person name="Spieth J."/>
            <person name="Clifton W.S."/>
            <person name="Fulton R."/>
            <person name="Chunyan W."/>
            <person name="Wollam A."/>
            <person name="Shah N."/>
            <person name="Pepin K."/>
            <person name="Bhonagiri V."/>
            <person name="Nash W."/>
            <person name="Johnson M."/>
            <person name="Thiruvilangam P."/>
            <person name="Wilson R."/>
        </authorList>
    </citation>
    <scope>NUCLEOTIDE SEQUENCE [LARGE SCALE GENOMIC DNA]</scope>
    <source>
        <strain>ATCC BAA-731 / CDC346-86 / RSK2980</strain>
    </source>
</reference>
<organism>
    <name type="scientific">Salmonella arizonae (strain ATCC BAA-731 / CDC346-86 / RSK2980)</name>
    <dbReference type="NCBI Taxonomy" id="41514"/>
    <lineage>
        <taxon>Bacteria</taxon>
        <taxon>Pseudomonadati</taxon>
        <taxon>Pseudomonadota</taxon>
        <taxon>Gammaproteobacteria</taxon>
        <taxon>Enterobacterales</taxon>
        <taxon>Enterobacteriaceae</taxon>
        <taxon>Salmonella</taxon>
    </lineage>
</organism>
<name>CAIT_SALAR</name>
<sequence length="505" mass="56554">MKTDKKKSGIEPKVFFPPLIIVGILCWLTVRDLDAANNVINAVFSYVTNIWGWAFEWYMVVMLIGWFWLVFGPYAKKKLGDEPPEFSTTSWIFMMFASCTSAAVLFWGSIEIYYYISTPPFGLAPNSTGAKEIGLAYSLFHWGPLPWATYSFLSVAFAYFFFVRKMDVIRPSSTLVPLVGEKHAKGLFGTIVDNFYLVALIFAMGTSLGLATPLVTECMQYLFGIPHTLELDAIIITCWIILNAICVACGLQKGVRIASDVRSYLSFLMLGWVFIVSGASFIMNYFTDSVGTLLMYLPRMLFYTDPIGKSGFPQSWTVFYWAWWVIYAIQMSIFLARISRGRTVRELCFGMVLGLTASTWILWTVLGSNTLLLMDKNILNIPQLIDQHGVARAIIETWAALPLSTATMWGFFILCFIATVTLINACSYTLAMSTCREVRDGEEPPLLVRIGWSVLVGIIGIVLLALGGLKPIQTAIIAGGCPLFFVNIMVTLSFIKDAKTHWKDK</sequence>